<comment type="function">
    <text evidence="1">DNA-dependent RNA polymerase catalyzes the transcription of DNA into RNA using the four ribonucleoside triphosphates as substrates.</text>
</comment>
<comment type="catalytic activity">
    <reaction evidence="1">
        <text>RNA(n) + a ribonucleoside 5'-triphosphate = RNA(n+1) + diphosphate</text>
        <dbReference type="Rhea" id="RHEA:21248"/>
        <dbReference type="Rhea" id="RHEA-COMP:14527"/>
        <dbReference type="Rhea" id="RHEA-COMP:17342"/>
        <dbReference type="ChEBI" id="CHEBI:33019"/>
        <dbReference type="ChEBI" id="CHEBI:61557"/>
        <dbReference type="ChEBI" id="CHEBI:140395"/>
        <dbReference type="EC" id="2.7.7.6"/>
    </reaction>
</comment>
<comment type="cofactor">
    <cofactor evidence="1">
        <name>Zn(2+)</name>
        <dbReference type="ChEBI" id="CHEBI:29105"/>
    </cofactor>
    <text evidence="1">Binds 1 Zn(2+) ion per subunit.</text>
</comment>
<comment type="subunit">
    <text evidence="1">In plastids the minimal PEP RNA polymerase catalytic core is composed of four subunits: alpha, beta, beta', and beta''. When a (nuclear-encoded) sigma factor is associated with the core the holoenzyme is formed, which can initiate transcription.</text>
</comment>
<comment type="subcellular location">
    <subcellularLocation>
        <location evidence="1">Plastid</location>
        <location evidence="1">Chloroplast</location>
    </subcellularLocation>
</comment>
<comment type="similarity">
    <text evidence="1">Belongs to the RNA polymerase beta' chain family. RpoC2 subfamily.</text>
</comment>
<evidence type="ECO:0000255" key="1">
    <source>
        <dbReference type="HAMAP-Rule" id="MF_01324"/>
    </source>
</evidence>
<sequence>MAERANLVFHNKVIDGTAIKRLISRLIDHFGMAYTSHILDQVKTLGFQQATATSISLGIDDLLTIPSKGWLVQDAEQQSLILEKHHHYGNVHAVEKLRQSIEIWYATSEYLRQEMNPNFRMTDPFNPVHMMSFSGARGNASQVHQLVGMRGLMSDPQGQMIDLPIQSNLREGLSLTEYIISCYGARKGVVDTAVRTSDAGYLTRRLVEVVQHIVVRRTDCGTIRGISVSPRNKNRMMSERIFIQTLIGRVLADDIYIGSRCVAFRNQDLGIGLVNRLITFGTQSISIRTPFTCRSTSWICRLCYGRSPTHGDLVELGEAVGIIAGQSIGEPGTQLTLRTFHTGGVFTGGTAEHVRAPYNGKIKFNEDLVHPTRTRHGHPAFLCYMDLSVIIESEDIIHSVTIPPKSFLLVQNDQYVESEQVIAEIREGTYTFHFKERVRKYIYSDSEGEMHWSTDVSHAPEFTYSNVHLLPKTSHLWVLSGNSCGSSLILFSIHKDQDQMNIPFLSVERKSISSLSVNNDQVSQKFLSSDFADKKKSGTPYYSELNGILGTSHYNFIYSAIFHENSDLLAKRRRNRFLIPFQPIQEQEKEFIPHSGISIEIPINGIFRRNSIFAFFDDPRYRRKSSGILKYGTLKADSIIQKEDMIEYRGVQKFKTKYEMKVDRFFFIPEEVHILPESSAIMVQNYSIIGVDTRITLNIRSQVGGLIRVERKKKRIELKIFSGDIHFPDKTDKISRHSGILIPPGRGKTNAKESKKLKNWIYVQRITPTKKKFFVLVRPVATYEIADSINLATLFPQDLFREKDNIQLRVFNYILYGNGKPTRGISDTSIQLVRTCLVLNWDQDNKNSSLEEVRAFFVEVSTKGLIRDFIRIGLVKSHISYIRKRNNPPDSGWISADHMNPFYSISPKADILQQSLRQNHGTIRMFLNRNKESQSLLILSSSNCFRIGPFNHVKYHNVINQSIKKKPLITIKNSPGPLGTSIPISNFYSFLPLLTYNQISVIKYLQLDNLKYIFQVINSYLIDEKGRILNLDPYSNVVLNPIKLNWYFLHQNYYHNYCAETSTIISLGQFFCENVCIAKKEPHLKSGQVLIVQRDSVVIRSAKPYLATPGAKVHGHYREILYEGDTLVTFIYEKSRSGDITQGLPKVEQVLEVRSIDSISLNLEKRIKGWNKCITRILGIPWGFLIGAELTIVQSRISLVNKIQKVYRSQGVQIHNRHIEIIVRQITSKVLVSEEGMSNVFLPGELIGLLRAERTGRALEEAICYRAVLLGITRASLNTQSFISEASFQETARVLAKAALRGRIDWLKGLKENVVLGGVIPAGTGFNKGLVHCSRQHTNILLEKKTKNLSLFEGDMRDILFYHREFCDSSISK</sequence>
<reference key="1">
    <citation type="submission" date="2007-03" db="EMBL/GenBank/DDBJ databases">
        <title>Sequencing analysis of Lepidium virginicum JO26 chloroplast DNA.</title>
        <authorList>
            <person name="Hosouchi T."/>
            <person name="Tsuruoka H."/>
            <person name="Kotani H."/>
        </authorList>
    </citation>
    <scope>NUCLEOTIDE SEQUENCE [LARGE SCALE GENOMIC DNA]</scope>
</reference>
<feature type="chain" id="PRO_0000353567" description="DNA-directed RNA polymerase subunit beta''">
    <location>
        <begin position="1"/>
        <end position="1373"/>
    </location>
</feature>
<feature type="binding site" evidence="1">
    <location>
        <position position="220"/>
    </location>
    <ligand>
        <name>Zn(2+)</name>
        <dbReference type="ChEBI" id="CHEBI:29105"/>
    </ligand>
</feature>
<feature type="binding site" evidence="1">
    <location>
        <position position="293"/>
    </location>
    <ligand>
        <name>Zn(2+)</name>
        <dbReference type="ChEBI" id="CHEBI:29105"/>
    </ligand>
</feature>
<feature type="binding site" evidence="1">
    <location>
        <position position="300"/>
    </location>
    <ligand>
        <name>Zn(2+)</name>
        <dbReference type="ChEBI" id="CHEBI:29105"/>
    </ligand>
</feature>
<feature type="binding site" evidence="1">
    <location>
        <position position="303"/>
    </location>
    <ligand>
        <name>Zn(2+)</name>
        <dbReference type="ChEBI" id="CHEBI:29105"/>
    </ligand>
</feature>
<dbReference type="EC" id="2.7.7.6" evidence="1"/>
<dbReference type="EMBL" id="AP009374">
    <property type="protein sequence ID" value="BAF50451.1"/>
    <property type="molecule type" value="Genomic_DNA"/>
</dbReference>
<dbReference type="RefSeq" id="YP_001123627.1">
    <property type="nucleotide sequence ID" value="NC_009273.1"/>
</dbReference>
<dbReference type="SMR" id="A4QL96"/>
<dbReference type="GeneID" id="4962054"/>
<dbReference type="GO" id="GO:0009507">
    <property type="term" value="C:chloroplast"/>
    <property type="evidence" value="ECO:0007669"/>
    <property type="project" value="UniProtKB-SubCell"/>
</dbReference>
<dbReference type="GO" id="GO:0000428">
    <property type="term" value="C:DNA-directed RNA polymerase complex"/>
    <property type="evidence" value="ECO:0007669"/>
    <property type="project" value="UniProtKB-KW"/>
</dbReference>
<dbReference type="GO" id="GO:0005739">
    <property type="term" value="C:mitochondrion"/>
    <property type="evidence" value="ECO:0007669"/>
    <property type="project" value="GOC"/>
</dbReference>
<dbReference type="GO" id="GO:0003677">
    <property type="term" value="F:DNA binding"/>
    <property type="evidence" value="ECO:0007669"/>
    <property type="project" value="UniProtKB-UniRule"/>
</dbReference>
<dbReference type="GO" id="GO:0003899">
    <property type="term" value="F:DNA-directed RNA polymerase activity"/>
    <property type="evidence" value="ECO:0007669"/>
    <property type="project" value="UniProtKB-UniRule"/>
</dbReference>
<dbReference type="GO" id="GO:0008270">
    <property type="term" value="F:zinc ion binding"/>
    <property type="evidence" value="ECO:0007669"/>
    <property type="project" value="UniProtKB-UniRule"/>
</dbReference>
<dbReference type="GO" id="GO:0006351">
    <property type="term" value="P:DNA-templated transcription"/>
    <property type="evidence" value="ECO:0007669"/>
    <property type="project" value="UniProtKB-UniRule"/>
</dbReference>
<dbReference type="CDD" id="cd02655">
    <property type="entry name" value="RNAP_beta'_C"/>
    <property type="match status" value="1"/>
</dbReference>
<dbReference type="FunFam" id="1.10.132.30:FF:000002">
    <property type="entry name" value="DNA-directed RNA polymerase subunit beta"/>
    <property type="match status" value="1"/>
</dbReference>
<dbReference type="FunFam" id="1.10.1790.20:FF:000002">
    <property type="entry name" value="DNA-directed RNA polymerase subunit beta"/>
    <property type="match status" value="1"/>
</dbReference>
<dbReference type="FunFam" id="1.10.274.100:FF:000011">
    <property type="entry name" value="DNA-directed RNA polymerase subunit beta"/>
    <property type="match status" value="1"/>
</dbReference>
<dbReference type="Gene3D" id="1.10.132.30">
    <property type="match status" value="1"/>
</dbReference>
<dbReference type="Gene3D" id="1.10.150.390">
    <property type="match status" value="1"/>
</dbReference>
<dbReference type="Gene3D" id="1.10.1790.20">
    <property type="match status" value="1"/>
</dbReference>
<dbReference type="Gene3D" id="1.10.274.100">
    <property type="entry name" value="RNA polymerase Rpb1, domain 3"/>
    <property type="match status" value="1"/>
</dbReference>
<dbReference type="HAMAP" id="MF_01324">
    <property type="entry name" value="RNApol_bact_RpoC2"/>
    <property type="match status" value="1"/>
</dbReference>
<dbReference type="InterPro" id="IPR012756">
    <property type="entry name" value="DNA-dir_RpoC2_beta_pp"/>
</dbReference>
<dbReference type="InterPro" id="IPR050254">
    <property type="entry name" value="RNA_pol_beta''_euk"/>
</dbReference>
<dbReference type="InterPro" id="IPR042102">
    <property type="entry name" value="RNA_pol_Rpb1_3_sf"/>
</dbReference>
<dbReference type="InterPro" id="IPR007083">
    <property type="entry name" value="RNA_pol_Rpb1_4"/>
</dbReference>
<dbReference type="InterPro" id="IPR007081">
    <property type="entry name" value="RNA_pol_Rpb1_5"/>
</dbReference>
<dbReference type="InterPro" id="IPR038120">
    <property type="entry name" value="Rpb1_funnel_sf"/>
</dbReference>
<dbReference type="NCBIfam" id="TIGR02388">
    <property type="entry name" value="rpoC2_cyan"/>
    <property type="match status" value="1"/>
</dbReference>
<dbReference type="PANTHER" id="PTHR34995">
    <property type="entry name" value="DNA-DIRECTED RNA POLYMERASE SUBUNIT BETA"/>
    <property type="match status" value="1"/>
</dbReference>
<dbReference type="PANTHER" id="PTHR34995:SF1">
    <property type="entry name" value="DNA-DIRECTED RNA POLYMERASE SUBUNIT BETA"/>
    <property type="match status" value="1"/>
</dbReference>
<dbReference type="Pfam" id="PF05000">
    <property type="entry name" value="RNA_pol_Rpb1_4"/>
    <property type="match status" value="1"/>
</dbReference>
<dbReference type="Pfam" id="PF04998">
    <property type="entry name" value="RNA_pol_Rpb1_5"/>
    <property type="match status" value="2"/>
</dbReference>
<dbReference type="SUPFAM" id="SSF64484">
    <property type="entry name" value="beta and beta-prime subunits of DNA dependent RNA-polymerase"/>
    <property type="match status" value="1"/>
</dbReference>
<geneLocation type="chloroplast"/>
<protein>
    <recommendedName>
        <fullName evidence="1">DNA-directed RNA polymerase subunit beta''</fullName>
        <ecNumber evidence="1">2.7.7.6</ecNumber>
    </recommendedName>
    <alternativeName>
        <fullName evidence="1">PEP</fullName>
    </alternativeName>
    <alternativeName>
        <fullName evidence="1">Plastid-encoded RNA polymerase subunit beta''</fullName>
        <shortName evidence="1">RNA polymerase subunit beta''</shortName>
    </alternativeName>
</protein>
<proteinExistence type="inferred from homology"/>
<keyword id="KW-0150">Chloroplast</keyword>
<keyword id="KW-0240">DNA-directed RNA polymerase</keyword>
<keyword id="KW-0479">Metal-binding</keyword>
<keyword id="KW-0548">Nucleotidyltransferase</keyword>
<keyword id="KW-0934">Plastid</keyword>
<keyword id="KW-0804">Transcription</keyword>
<keyword id="KW-0808">Transferase</keyword>
<keyword id="KW-0862">Zinc</keyword>
<name>RPOC2_LEPVR</name>
<gene>
    <name evidence="1" type="primary">rpoC2</name>
</gene>
<organism>
    <name type="scientific">Lepidium virginicum</name>
    <name type="common">Virginia pepperweed</name>
    <dbReference type="NCBI Taxonomy" id="59292"/>
    <lineage>
        <taxon>Eukaryota</taxon>
        <taxon>Viridiplantae</taxon>
        <taxon>Streptophyta</taxon>
        <taxon>Embryophyta</taxon>
        <taxon>Tracheophyta</taxon>
        <taxon>Spermatophyta</taxon>
        <taxon>Magnoliopsida</taxon>
        <taxon>eudicotyledons</taxon>
        <taxon>Gunneridae</taxon>
        <taxon>Pentapetalae</taxon>
        <taxon>rosids</taxon>
        <taxon>malvids</taxon>
        <taxon>Brassicales</taxon>
        <taxon>Brassicaceae</taxon>
        <taxon>Lepidieae</taxon>
        <taxon>Lepidium</taxon>
    </lineage>
</organism>
<accession>A4QL96</accession>